<accession>P05076</accession>
<name>V16K_TRVTC</name>
<evidence type="ECO:0000256" key="1">
    <source>
        <dbReference type="SAM" id="MobiDB-lite"/>
    </source>
</evidence>
<sequence>MTCVLKGCVNEVTVLGHETCSIGHANKLRKQVADMVGVTRRCAENNCGWFVCVIINDFTFDVYNCCGRSHLEKCRKRFEARNREIWKQVERIRGEKASATVKKSHKSKPSKKKFKERKDFGTPKRFLRDDVPLGIDQLFVF</sequence>
<organismHost>
    <name type="scientific">Beta vulgaris</name>
    <name type="common">Sugar beet</name>
    <dbReference type="NCBI Taxonomy" id="161934"/>
</organismHost>
<organismHost>
    <name type="scientific">Capsicum annuum</name>
    <name type="common">Capsicum pepper</name>
    <dbReference type="NCBI Taxonomy" id="4072"/>
</organismHost>
<organismHost>
    <name type="scientific">Hyacinthus</name>
    <dbReference type="NCBI Taxonomy" id="82024"/>
</organismHost>
<organismHost>
    <name type="scientific">Narcissus pseudonarcissus</name>
    <name type="common">Daffodil</name>
    <dbReference type="NCBI Taxonomy" id="39639"/>
</organismHost>
<organismHost>
    <name type="scientific">Nicotiana tabacum</name>
    <name type="common">Common tobacco</name>
    <dbReference type="NCBI Taxonomy" id="4097"/>
</organismHost>
<organismHost>
    <name type="scientific">Solanum tuberosum</name>
    <name type="common">Potato</name>
    <dbReference type="NCBI Taxonomy" id="4113"/>
</organismHost>
<organismHost>
    <name type="scientific">Spinacia oleracea</name>
    <name type="common">Spinach</name>
    <dbReference type="NCBI Taxonomy" id="3562"/>
</organismHost>
<organismHost>
    <name type="scientific">Stellaria media</name>
    <name type="common">Common chickweed</name>
    <name type="synonym">Alsine media</name>
    <dbReference type="NCBI Taxonomy" id="13274"/>
</organismHost>
<organismHost>
    <name type="scientific">Tulipa</name>
    <dbReference type="NCBI Taxonomy" id="13305"/>
</organismHost>
<organismHost>
    <name type="scientific">Viola arvensis</name>
    <name type="common">European field pansy</name>
    <name type="synonym">Field violet</name>
    <dbReference type="NCBI Taxonomy" id="97415"/>
</organismHost>
<organism>
    <name type="scientific">Tobacco rattle virus (strain TCM)</name>
    <dbReference type="NCBI Taxonomy" id="12299"/>
    <lineage>
        <taxon>Viruses</taxon>
        <taxon>Riboviria</taxon>
        <taxon>Orthornavirae</taxon>
        <taxon>Kitrinoviricota</taxon>
        <taxon>Alsuviricetes</taxon>
        <taxon>Martellivirales</taxon>
        <taxon>Virgaviridae</taxon>
        <taxon>Tobravirus</taxon>
        <taxon>Tobacco rattle virus</taxon>
    </lineage>
</organism>
<proteinExistence type="predicted"/>
<protein>
    <recommendedName>
        <fullName>16 kDa protein</fullName>
    </recommendedName>
</protein>
<dbReference type="EMBL" id="X03955">
    <property type="protein sequence ID" value="CAA27587.1"/>
    <property type="molecule type" value="Genomic_RNA"/>
</dbReference>
<dbReference type="PIR" id="A04187">
    <property type="entry name" value="WMBV6T"/>
</dbReference>
<dbReference type="SMR" id="P05076"/>
<dbReference type="InterPro" id="IPR007968">
    <property type="entry name" value="Tobacco_rattle_virus_16kDa"/>
</dbReference>
<dbReference type="Pfam" id="PF05304">
    <property type="entry name" value="DUF728"/>
    <property type="match status" value="1"/>
</dbReference>
<reference key="1">
    <citation type="journal article" date="1986" name="Nucleic Acids Res.">
        <title>RNA 2 of tobacco rattle virus strain TCM encodes an unexpected gene.</title>
        <authorList>
            <person name="Angenent G.C."/>
            <person name="Linthorst H.J.M."/>
            <person name="van Belkum A.F."/>
            <person name="Cornelissen B.J.C."/>
            <person name="Bol J.F."/>
        </authorList>
    </citation>
    <scope>NUCLEOTIDE SEQUENCE [GENOMIC RNA]</scope>
</reference>
<feature type="chain" id="PRO_0000222512" description="16 kDa protein">
    <location>
        <begin position="1"/>
        <end position="141"/>
    </location>
</feature>
<feature type="region of interest" description="Disordered" evidence="1">
    <location>
        <begin position="97"/>
        <end position="119"/>
    </location>
</feature>
<feature type="compositionally biased region" description="Basic residues" evidence="1">
    <location>
        <begin position="102"/>
        <end position="115"/>
    </location>
</feature>